<evidence type="ECO:0000255" key="1"/>
<evidence type="ECO:0000255" key="2">
    <source>
        <dbReference type="PROSITE-ProRule" id="PRU10055"/>
    </source>
</evidence>
<evidence type="ECO:0000305" key="3"/>
<protein>
    <recommendedName>
        <fullName>Thermostable beta-glucosidase B</fullName>
        <ecNumber>3.2.1.21</ecNumber>
    </recommendedName>
    <alternativeName>
        <fullName>Amygdalase</fullName>
    </alternativeName>
    <alternativeName>
        <fullName>Beta-D-glucoside glucohydrolase</fullName>
    </alternativeName>
    <alternativeName>
        <fullName>Cellobiase</fullName>
    </alternativeName>
    <alternativeName>
        <fullName>Gentiobiase</fullName>
    </alternativeName>
</protein>
<feature type="chain" id="PRO_0000063878" description="Thermostable beta-glucosidase B">
    <location>
        <begin position="1"/>
        <end position="473"/>
    </location>
</feature>
<feature type="active site" description="Proton donor" evidence="1">
    <location>
        <position position="196"/>
    </location>
</feature>
<feature type="active site" description="Nucleophile" evidence="2">
    <location>
        <position position="378"/>
    </location>
</feature>
<accession>P38645</accession>
<name>BGLB_THEBI</name>
<organism>
    <name type="scientific">Thermobispora bispora</name>
    <name type="common">Microbispora bispora</name>
    <dbReference type="NCBI Taxonomy" id="2006"/>
    <lineage>
        <taxon>Bacteria</taxon>
        <taxon>Bacillati</taxon>
        <taxon>Actinomycetota</taxon>
        <taxon>Actinomycetes</taxon>
        <taxon>Streptosporangiales</taxon>
        <taxon>Streptosporangiaceae</taxon>
        <taxon>Thermobispora</taxon>
    </lineage>
</organism>
<dbReference type="EC" id="3.2.1.21"/>
<dbReference type="EMBL" id="M97265">
    <property type="protein sequence ID" value="AAA25311.1"/>
    <property type="molecule type" value="Genomic_DNA"/>
</dbReference>
<dbReference type="PIR" id="A48949">
    <property type="entry name" value="A48949"/>
</dbReference>
<dbReference type="SMR" id="P38645"/>
<dbReference type="CAZy" id="GH1">
    <property type="family name" value="Glycoside Hydrolase Family 1"/>
</dbReference>
<dbReference type="GO" id="GO:0005829">
    <property type="term" value="C:cytosol"/>
    <property type="evidence" value="ECO:0007669"/>
    <property type="project" value="TreeGrafter"/>
</dbReference>
<dbReference type="GO" id="GO:0008422">
    <property type="term" value="F:beta-glucosidase activity"/>
    <property type="evidence" value="ECO:0007669"/>
    <property type="project" value="UniProtKB-EC"/>
</dbReference>
<dbReference type="GO" id="GO:0030245">
    <property type="term" value="P:cellulose catabolic process"/>
    <property type="evidence" value="ECO:0007669"/>
    <property type="project" value="UniProtKB-KW"/>
</dbReference>
<dbReference type="FunFam" id="3.20.20.80:FF:000004">
    <property type="entry name" value="Beta-glucosidase 6-phospho-beta-glucosidase"/>
    <property type="match status" value="1"/>
</dbReference>
<dbReference type="Gene3D" id="3.20.20.80">
    <property type="entry name" value="Glycosidases"/>
    <property type="match status" value="1"/>
</dbReference>
<dbReference type="InterPro" id="IPR001360">
    <property type="entry name" value="Glyco_hydro_1"/>
</dbReference>
<dbReference type="InterPro" id="IPR018120">
    <property type="entry name" value="Glyco_hydro_1_AS"/>
</dbReference>
<dbReference type="InterPro" id="IPR017736">
    <property type="entry name" value="Glyco_hydro_1_beta-glucosidase"/>
</dbReference>
<dbReference type="InterPro" id="IPR033132">
    <property type="entry name" value="Glyco_hydro_1_N_CS"/>
</dbReference>
<dbReference type="InterPro" id="IPR017853">
    <property type="entry name" value="Glycoside_hydrolase_SF"/>
</dbReference>
<dbReference type="NCBIfam" id="TIGR03356">
    <property type="entry name" value="BGL"/>
    <property type="match status" value="1"/>
</dbReference>
<dbReference type="PANTHER" id="PTHR10353">
    <property type="entry name" value="GLYCOSYL HYDROLASE"/>
    <property type="match status" value="1"/>
</dbReference>
<dbReference type="PANTHER" id="PTHR10353:SF36">
    <property type="entry name" value="LP05116P"/>
    <property type="match status" value="1"/>
</dbReference>
<dbReference type="Pfam" id="PF00232">
    <property type="entry name" value="Glyco_hydro_1"/>
    <property type="match status" value="1"/>
</dbReference>
<dbReference type="PRINTS" id="PR00131">
    <property type="entry name" value="GLHYDRLASE1"/>
</dbReference>
<dbReference type="SUPFAM" id="SSF51445">
    <property type="entry name" value="(Trans)glycosidases"/>
    <property type="match status" value="1"/>
</dbReference>
<dbReference type="PROSITE" id="PS00572">
    <property type="entry name" value="GLYCOSYL_HYDROL_F1_1"/>
    <property type="match status" value="1"/>
</dbReference>
<dbReference type="PROSITE" id="PS00653">
    <property type="entry name" value="GLYCOSYL_HYDROL_F1_2"/>
    <property type="match status" value="1"/>
</dbReference>
<proteinExistence type="evidence at protein level"/>
<gene>
    <name type="primary">bglB</name>
</gene>
<keyword id="KW-0119">Carbohydrate metabolism</keyword>
<keyword id="KW-0136">Cellulose degradation</keyword>
<keyword id="KW-0963">Cytoplasm</keyword>
<keyword id="KW-0326">Glycosidase</keyword>
<keyword id="KW-0378">Hydrolase</keyword>
<keyword id="KW-0624">Polysaccharide degradation</keyword>
<reference key="1">
    <citation type="journal article" date="1992" name="Appl. Environ. Microbiol.">
        <title>Cloning, characterization, and nucleotide sequence of a gene encoding Microbispora bispora BglB, a thermostable beta-glucosidase expressed in Escherichia coli.</title>
        <authorList>
            <person name="Wright R.M."/>
            <person name="Yablonsky M.D."/>
            <person name="Shalita Z.P."/>
            <person name="Goyal A.K."/>
            <person name="Eveleigh D.E."/>
        </authorList>
    </citation>
    <scope>NUCLEOTIDE SEQUENCE [GENOMIC DNA]</scope>
    <source>
        <strain>NRRL 15568</strain>
    </source>
</reference>
<comment type="catalytic activity">
    <reaction>
        <text>Hydrolysis of terminal, non-reducing beta-D-glucosyl residues with release of beta-D-glucose.</text>
        <dbReference type="EC" id="3.2.1.21"/>
    </reaction>
</comment>
<comment type="biophysicochemical properties">
    <temperatureDependence>
        <text>Thermostable, retains about 70% of its activity at 60 degrees Celsius.</text>
    </temperatureDependence>
</comment>
<comment type="subcellular location">
    <subcellularLocation>
        <location>Cytoplasm</location>
    </subcellularLocation>
</comment>
<comment type="miscellaneous">
    <text>Shows greater activity against cellobiose than against aryl-beta-D-glucosides.</text>
</comment>
<comment type="similarity">
    <text evidence="3">Belongs to the glycosyl hydrolase 1 family.</text>
</comment>
<sequence>MTESAMTSRAGRGRGADLVAAVVQGHAAASDAAGDLSFPDGFIWGAATAAYQIEGAWREDGRGLWDVFSHTPGKVASGHTGDIACDHYHRYADDVRLMAGLGDRVYRFSVAWPRIVPDGSGPVNPAGLDFYDRLVDELLGHGITPYPTLYHWDLPQTLEDRGGWAARDTAYRFAEYALAVHRRLGDRVRCWITLNEPWVAAFLATHRGAPGAADVPRFRAVHHLLLGHGLGLRLRSAGAGQLGLTLSLSPVIEARPGVRGGGRRVDALANRQFLDPALRGRYPEEVLKIMAGHARLGHPGRDLETIHQPVDLLGVNYYSHVRLAAEGEPANRLPGSEGIRFERPTAVTAWPGDRPDGLRTLLLRLSRDYPGVGLIITENGAAFDDRADGDRVHDPERIRYLTATLRAVHDAIMAGADLRGYFVWSVLDNFEWAYGYHKRGIVYVDYTTMRRIPRESALWYRDVVRRNGLRNGE</sequence>